<organism>
    <name type="scientific">Mus musculus</name>
    <name type="common">Mouse</name>
    <dbReference type="NCBI Taxonomy" id="10090"/>
    <lineage>
        <taxon>Eukaryota</taxon>
        <taxon>Metazoa</taxon>
        <taxon>Chordata</taxon>
        <taxon>Craniata</taxon>
        <taxon>Vertebrata</taxon>
        <taxon>Euteleostomi</taxon>
        <taxon>Mammalia</taxon>
        <taxon>Eutheria</taxon>
        <taxon>Euarchontoglires</taxon>
        <taxon>Glires</taxon>
        <taxon>Rodentia</taxon>
        <taxon>Myomorpha</taxon>
        <taxon>Muroidea</taxon>
        <taxon>Muridae</taxon>
        <taxon>Murinae</taxon>
        <taxon>Mus</taxon>
        <taxon>Mus</taxon>
    </lineage>
</organism>
<reference key="1">
    <citation type="journal article" date="1994" name="Development">
        <title>Expression of inhibin subunits and follistatin during postimplantation mouse development: decidual expression of activin and expression of follistatin in primitive streak, somites and hindbrain.</title>
        <authorList>
            <person name="Albano R.M."/>
            <person name="Arkell R."/>
            <person name="Beddington R.S.P."/>
            <person name="Smith J.C."/>
        </authorList>
    </citation>
    <scope>NUCLEOTIDE SEQUENCE [MRNA] (ISOFORM 2)</scope>
    <source>
        <tissue>Ovary</tissue>
    </source>
</reference>
<reference key="2">
    <citation type="journal article" date="2004" name="Genome Res.">
        <title>The status, quality, and expansion of the NIH full-length cDNA project: the Mammalian Gene Collection (MGC).</title>
        <authorList>
            <consortium name="The MGC Project Team"/>
        </authorList>
    </citation>
    <scope>NUCLEOTIDE SEQUENCE [LARGE SCALE MRNA] (ISOFORM 1)</scope>
    <source>
        <tissue>Brain</tissue>
    </source>
</reference>
<reference key="3">
    <citation type="journal article" date="1994" name="Endocrinology">
        <title>Activin-binding protein follistatin messenger ribonucleic acid and secreted protein levels are induced by chorionic gonadotropin in cultured human granulosa-luteal cells.</title>
        <authorList>
            <person name="Tuuri T."/>
            <person name="Eramaa M."/>
            <person name="Hilden K."/>
            <person name="Ritvos O."/>
        </authorList>
    </citation>
    <scope>NUCLEOTIDE SEQUENCE [MRNA] OF 3-341 (ISOFORM 1)</scope>
    <source>
        <strain>CBA X NMR1</strain>
        <tissue>Ovary</tissue>
    </source>
</reference>
<reference key="4">
    <citation type="journal article" date="1995" name="Nature">
        <title>Multiple defects and perinatal death in mice deficient in follistatin.</title>
        <authorList>
            <person name="Matzuk M.M."/>
            <person name="Lu N."/>
            <person name="Vogel H."/>
            <person name="Sellheyer K."/>
            <person name="Roop D.R."/>
            <person name="Bradley A."/>
        </authorList>
    </citation>
    <scope>DISRUPTION PHENOTYPE</scope>
    <scope>FUNCTION</scope>
</reference>
<reference key="5">
    <citation type="journal article" date="1997" name="Mech. Dev.">
        <title>The dorsalizing and neural inducing gene follistatin is an antagonist of BMP-4.</title>
        <authorList>
            <person name="Fainsod A."/>
            <person name="Deissler K."/>
            <person name="Yelin R."/>
            <person name="Marom K."/>
            <person name="Epstein M."/>
            <person name="Pillemer G."/>
            <person name="Steinbeisser H."/>
            <person name="Blum M."/>
        </authorList>
    </citation>
    <scope>FUNCTION</scope>
</reference>
<reference key="6">
    <citation type="journal article" date="2012" name="J. Cell Biol.">
        <title>Follistatin-mediated skeletal muscle hypertrophy is regulated by Smad3 and mTOR independently of myostatin.</title>
        <authorList>
            <person name="Winbanks C.E."/>
            <person name="Weeks K.L."/>
            <person name="Thomson R.E."/>
            <person name="Sepulveda P.V."/>
            <person name="Beyer C."/>
            <person name="Qian H."/>
            <person name="Chen J.L."/>
            <person name="Allen J.M."/>
            <person name="Lancaster G.I."/>
            <person name="Febbraio M.A."/>
            <person name="Harrison C.A."/>
            <person name="McMullen J.R."/>
            <person name="Chamberlain J.S."/>
            <person name="Gregorevic P."/>
        </authorList>
    </citation>
    <scope>FUNCTION</scope>
</reference>
<reference key="7">
    <citation type="journal article" date="2010" name="Mol. Endocrinol.">
        <title>Regulation of muscle mass by follistatin and activins.</title>
        <authorList>
            <person name="Lee S.J."/>
            <person name="Lee Y.S."/>
            <person name="Zimmers T.A."/>
            <person name="Soleimani A."/>
            <person name="Matzuk M.M."/>
            <person name="Tsuchida K."/>
            <person name="Cohn R.D."/>
            <person name="Barton E.R."/>
        </authorList>
    </citation>
    <scope>FUNCTION</scope>
    <scope>DISRUPTION PHENOTYPE</scope>
</reference>
<reference key="8">
    <citation type="journal article" date="2016" name="JCI Insight">
        <title>Integrated expression analysis of muscle hypertrophy identifies Asb2 as a negative regulator of muscle mass.</title>
        <authorList>
            <person name="Davey J.R."/>
            <person name="Watt K.I."/>
            <person name="Parker B.L."/>
            <person name="Chaudhuri R."/>
            <person name="Ryall J.G."/>
            <person name="Cunningham L."/>
            <person name="Qian H."/>
            <person name="Sartorelli V."/>
            <person name="Sandri M."/>
            <person name="Chamberlain J."/>
            <person name="James D.E."/>
            <person name="Gregorevic P."/>
        </authorList>
    </citation>
    <scope>ROLE IN MUSCLE HYPERTROPHY</scope>
</reference>
<comment type="function">
    <text evidence="1 6 7 9 10">Multifunctional regulatory protein whose primary function is to antagonize members of the transforming growth factor beta (TGF-beta) superfamily including activin, myostatin, GDF11 or bone morphogenetic proteins (BMPs) (PubMed:7885475, PubMed:20810712). Mechanistically, binds to these ligands in the extracellular space, blocking their type II receptor-binding site to inhibit downstream signaling (By similarity). Plays an essential role in muscle fiber formation and growth both by preventing the repressive effects of myostatin and through SMAD3/AKT/mTOR signaling independently of myostatin (PubMed:22711699, PubMed:20810712). Also promotes neural differentiation by antagonizing the action BMP4 (PubMed:9178255). Acts as a specific inhibitor of the biosynthesis and secretion of pituitary follicle stimulating hormone (FSH) by sequestering activin A/INHBA. On the other hand, translocates into the nucleus where it down-regulates rRNA synthesis and ribosome biogenesis to maintain cellular energy homeostasis by binding to rDNA (By similarity).</text>
</comment>
<comment type="subunit">
    <text evidence="1">Interacts with GDF11. Interacts with activin A/INHBA. Interacts with myostatin/MSTN.</text>
</comment>
<comment type="subcellular location">
    <subcellularLocation>
        <location evidence="1">Secreted</location>
    </subcellularLocation>
    <subcellularLocation>
        <location evidence="1">Nucleus</location>
        <location evidence="1">Nucleolus</location>
    </subcellularLocation>
</comment>
<comment type="alternative products">
    <event type="alternative splicing"/>
    <isoform>
        <id>P47931-1</id>
        <name>1</name>
        <sequence type="displayed"/>
    </isoform>
    <isoform>
        <id>P47931-2</id>
        <name>2</name>
        <sequence type="described" ref="VSP_060082"/>
    </isoform>
</comment>
<comment type="developmental stage">
    <text>Embryonic expression first occurs in the primitive streak, followed by expression in head mesoderm, somites, and specific rhombomeres of the hindbrain, and later in midbrain and diencephalon. No expression is seen in the node or notochord.</text>
</comment>
<comment type="disruption phenotype">
    <text evidence="6 9">Follistatin-deficient mice are retarded in their growth, have decreased mass of the diaphragm and intercostal muscles. They also fail to breathe and die within hours of birth. Some of the defects are similar to those of the BMP5 mutant mice, which have defects in the thirteenth pair of ribs (PubMed:7885475). Heterozygous loss of Fst is partially retained in a Mstn-null background, implying that follistatin normally acts to inhibit other TGF-beta family members in addition to myostatin to regulate muscle size (PubMed:20810712).</text>
</comment>
<comment type="miscellaneous">
    <text evidence="8">Induces muscle hypertrophy when injected into the tibialis anterior muscle with reduced response in older mice.</text>
</comment>
<proteinExistence type="evidence at transcript level"/>
<feature type="signal peptide" evidence="2">
    <location>
        <begin position="1"/>
        <end position="29"/>
    </location>
</feature>
<feature type="chain" id="PRO_0000010104" description="Follistatin">
    <location>
        <begin position="30"/>
        <end position="344"/>
    </location>
</feature>
<feature type="domain" description="TB" evidence="3">
    <location>
        <begin position="30"/>
        <end position="103"/>
    </location>
</feature>
<feature type="domain" description="Follistatin-like 1">
    <location>
        <begin position="94"/>
        <end position="117"/>
    </location>
</feature>
<feature type="domain" description="Kazal-like 1" evidence="4">
    <location>
        <begin position="112"/>
        <end position="166"/>
    </location>
</feature>
<feature type="domain" description="Follistatin-like 2">
    <location>
        <begin position="167"/>
        <end position="190"/>
    </location>
</feature>
<feature type="domain" description="Kazal-like 2" evidence="4">
    <location>
        <begin position="186"/>
        <end position="241"/>
    </location>
</feature>
<feature type="domain" description="Follistatin-like 3">
    <location>
        <begin position="244"/>
        <end position="268"/>
    </location>
</feature>
<feature type="domain" description="Kazal-like 3" evidence="4">
    <location>
        <begin position="264"/>
        <end position="318"/>
    </location>
</feature>
<feature type="region of interest" description="Disordered" evidence="5">
    <location>
        <begin position="315"/>
        <end position="344"/>
    </location>
</feature>
<feature type="compositionally biased region" description="Acidic residues" evidence="5">
    <location>
        <begin position="321"/>
        <end position="333"/>
    </location>
</feature>
<feature type="glycosylation site" description="N-linked (GlcNAc...) asparagine" evidence="2">
    <location>
        <position position="124"/>
    </location>
</feature>
<feature type="glycosylation site" description="N-linked (GlcNAc...) asparagine" evidence="2">
    <location>
        <position position="288"/>
    </location>
</feature>
<feature type="disulfide bond" evidence="1 3">
    <location>
        <begin position="32"/>
        <end position="55"/>
    </location>
</feature>
<feature type="disulfide bond" evidence="1 3">
    <location>
        <begin position="42"/>
        <end position="88"/>
    </location>
</feature>
<feature type="disulfide bond" evidence="1 3">
    <location>
        <begin position="56"/>
        <end position="91"/>
    </location>
</feature>
<feature type="disulfide bond" evidence="1">
    <location>
        <begin position="95"/>
        <end position="106"/>
    </location>
</feature>
<feature type="disulfide bond" evidence="1">
    <location>
        <begin position="100"/>
        <end position="116"/>
    </location>
</feature>
<feature type="disulfide bond" evidence="1">
    <location>
        <begin position="118"/>
        <end position="150"/>
    </location>
</feature>
<feature type="disulfide bond" evidence="1">
    <location>
        <begin position="122"/>
        <end position="143"/>
    </location>
</feature>
<feature type="disulfide bond" evidence="1">
    <location>
        <begin position="132"/>
        <end position="164"/>
    </location>
</feature>
<feature type="disulfide bond" evidence="1">
    <location>
        <begin position="168"/>
        <end position="179"/>
    </location>
</feature>
<feature type="disulfide bond" evidence="1">
    <location>
        <begin position="173"/>
        <end position="189"/>
    </location>
</feature>
<feature type="disulfide bond" evidence="1">
    <location>
        <begin position="192"/>
        <end position="225"/>
    </location>
</feature>
<feature type="disulfide bond" evidence="1">
    <location>
        <begin position="196"/>
        <end position="218"/>
    </location>
</feature>
<feature type="disulfide bond" evidence="1">
    <location>
        <begin position="207"/>
        <end position="239"/>
    </location>
</feature>
<feature type="disulfide bond" evidence="1">
    <location>
        <begin position="245"/>
        <end position="256"/>
    </location>
</feature>
<feature type="disulfide bond" evidence="1">
    <location>
        <begin position="250"/>
        <end position="267"/>
    </location>
</feature>
<feature type="disulfide bond" evidence="1">
    <location>
        <begin position="270"/>
        <end position="302"/>
    </location>
</feature>
<feature type="disulfide bond" evidence="1">
    <location>
        <begin position="274"/>
        <end position="295"/>
    </location>
</feature>
<feature type="disulfide bond" evidence="1">
    <location>
        <begin position="284"/>
        <end position="316"/>
    </location>
</feature>
<feature type="splice variant" id="VSP_060082" description="In isoform 2.">
    <original>KA</original>
    <variation>T</variation>
    <location>
        <begin position="241"/>
        <end position="242"/>
    </location>
</feature>
<evidence type="ECO:0000250" key="1">
    <source>
        <dbReference type="UniProtKB" id="P19883"/>
    </source>
</evidence>
<evidence type="ECO:0000255" key="2"/>
<evidence type="ECO:0000255" key="3">
    <source>
        <dbReference type="PROSITE-ProRule" id="PRU00697"/>
    </source>
</evidence>
<evidence type="ECO:0000255" key="4">
    <source>
        <dbReference type="PROSITE-ProRule" id="PRU00798"/>
    </source>
</evidence>
<evidence type="ECO:0000256" key="5">
    <source>
        <dbReference type="SAM" id="MobiDB-lite"/>
    </source>
</evidence>
<evidence type="ECO:0000269" key="6">
    <source>
    </source>
</evidence>
<evidence type="ECO:0000269" key="7">
    <source>
    </source>
</evidence>
<evidence type="ECO:0000269" key="8">
    <source>
    </source>
</evidence>
<evidence type="ECO:0000269" key="9">
    <source>
    </source>
</evidence>
<evidence type="ECO:0000269" key="10">
    <source>
    </source>
</evidence>
<evidence type="ECO:0000303" key="11">
    <source>
    </source>
</evidence>
<evidence type="ECO:0000303" key="12">
    <source>
    </source>
</evidence>
<evidence type="ECO:0000312" key="13">
    <source>
        <dbReference type="MGI" id="MGI:95586"/>
    </source>
</evidence>
<keyword id="KW-0025">Alternative splicing</keyword>
<keyword id="KW-1015">Disulfide bond</keyword>
<keyword id="KW-0325">Glycoprotein</keyword>
<keyword id="KW-0539">Nucleus</keyword>
<keyword id="KW-1185">Reference proteome</keyword>
<keyword id="KW-0677">Repeat</keyword>
<keyword id="KW-0964">Secreted</keyword>
<keyword id="KW-0732">Signal</keyword>
<name>FST_MOUSE</name>
<accession>P47931</accession>
<accession>A6H6P0</accession>
<gene>
    <name evidence="13" type="primary">Fst</name>
</gene>
<sequence>MVCARHQPGGLCLLLLLLCQFMEDRSAQAGNCWLRQAKNGRCQVLYKTELSKEECCSTGRLSTSWTEEDVNDNTLFKWMIFNGGAPNCIPCKETCENVDCGPGKKCRMNKKNKPRCVCAPDCSNITWKGPVCGLDGKTYRNECALLKARCKEQPELEVQYQGKCKKTCRDVFCPGSSTCVVDQTNNAYCVTCNRICPEPSSSEQYLCGNDGVTYSSACHLRKATCLLGRSIGLAYEGKCIKAKSCEDIQCGGGKKCLWDSKVGRGRCSLCDELCPDSKSDEPVCASDNATYASECAMKEAACSSGVLLEVKHSGSCNSISEETEEEEEEEDQDYSFPISSILEW</sequence>
<protein>
    <recommendedName>
        <fullName evidence="11">Follistatin</fullName>
        <shortName>FS</shortName>
    </recommendedName>
    <alternativeName>
        <fullName evidence="12">Activin-binding protein</fullName>
    </alternativeName>
</protein>
<dbReference type="EMBL" id="Z29532">
    <property type="protein sequence ID" value="CAA82648.1"/>
    <property type="molecule type" value="mRNA"/>
</dbReference>
<dbReference type="EMBL" id="BC144926">
    <property type="protein sequence ID" value="AAI44927.1"/>
    <property type="molecule type" value="mRNA"/>
</dbReference>
<dbReference type="EMBL" id="BC145945">
    <property type="protein sequence ID" value="AAI45946.1"/>
    <property type="molecule type" value="mRNA"/>
</dbReference>
<dbReference type="EMBL" id="X83377">
    <property type="protein sequence ID" value="CAA58291.1"/>
    <property type="molecule type" value="mRNA"/>
</dbReference>
<dbReference type="CCDS" id="CCDS36787.1">
    <molecule id="P47931-2"/>
</dbReference>
<dbReference type="CCDS" id="CCDS88534.1">
    <molecule id="P47931-1"/>
</dbReference>
<dbReference type="PIR" id="S45321">
    <property type="entry name" value="S45321"/>
</dbReference>
<dbReference type="RefSeq" id="NP_001288302.1">
    <molecule id="P47931-1"/>
    <property type="nucleotide sequence ID" value="NM_001301373.1"/>
</dbReference>
<dbReference type="RefSeq" id="NP_001288304.1">
    <property type="nucleotide sequence ID" value="NM_001301375.1"/>
</dbReference>
<dbReference type="RefSeq" id="NP_032072.1">
    <molecule id="P47931-2"/>
    <property type="nucleotide sequence ID" value="NM_008046.3"/>
</dbReference>
<dbReference type="SMR" id="P47931"/>
<dbReference type="BioGRID" id="199751">
    <property type="interactions" value="2"/>
</dbReference>
<dbReference type="FunCoup" id="P47931">
    <property type="interactions" value="909"/>
</dbReference>
<dbReference type="STRING" id="10090.ENSMUSP00000156375"/>
<dbReference type="MEROPS" id="I01.966"/>
<dbReference type="GlyCosmos" id="P47931">
    <property type="glycosylation" value="2 sites, No reported glycans"/>
</dbReference>
<dbReference type="GlyGen" id="P47931">
    <property type="glycosylation" value="2 sites"/>
</dbReference>
<dbReference type="PhosphoSitePlus" id="P47931"/>
<dbReference type="CPTAC" id="non-CPTAC-3710"/>
<dbReference type="PaxDb" id="10090-ENSMUSP00000022287"/>
<dbReference type="PeptideAtlas" id="P47931"/>
<dbReference type="ProteomicsDB" id="266877">
    <molecule id="P47931-1"/>
</dbReference>
<dbReference type="Antibodypedia" id="11023">
    <property type="antibodies" value="617 antibodies from 38 providers"/>
</dbReference>
<dbReference type="DNASU" id="14313"/>
<dbReference type="Ensembl" id="ENSMUST00000022287.8">
    <molecule id="P47931-1"/>
    <property type="protein sequence ID" value="ENSMUSP00000022287.7"/>
    <property type="gene ID" value="ENSMUSG00000021765.10"/>
</dbReference>
<dbReference type="Ensembl" id="ENSMUST00000231252.2">
    <molecule id="P47931-2"/>
    <property type="protein sequence ID" value="ENSMUSP00000156375.2"/>
    <property type="gene ID" value="ENSMUSG00000021765.10"/>
</dbReference>
<dbReference type="GeneID" id="14313"/>
<dbReference type="KEGG" id="mmu:14313"/>
<dbReference type="UCSC" id="uc007rxn.2">
    <molecule id="P47931-1"/>
    <property type="organism name" value="mouse"/>
</dbReference>
<dbReference type="AGR" id="MGI:95586"/>
<dbReference type="CTD" id="10468"/>
<dbReference type="MGI" id="MGI:95586">
    <property type="gene designation" value="Fst"/>
</dbReference>
<dbReference type="VEuPathDB" id="HostDB:ENSMUSG00000021765"/>
<dbReference type="eggNOG" id="KOG3649">
    <property type="taxonomic scope" value="Eukaryota"/>
</dbReference>
<dbReference type="GeneTree" id="ENSGT00940000157072"/>
<dbReference type="InParanoid" id="P47931"/>
<dbReference type="OMA" id="QRPACVC"/>
<dbReference type="OrthoDB" id="6614329at2759"/>
<dbReference type="PhylomeDB" id="P47931"/>
<dbReference type="TreeFam" id="TF106409"/>
<dbReference type="Reactome" id="R-MMU-2473224">
    <property type="pathway name" value="Antagonism of Activin by Follistatin"/>
</dbReference>
<dbReference type="BioGRID-ORCS" id="14313">
    <property type="hits" value="0 hits in 78 CRISPR screens"/>
</dbReference>
<dbReference type="ChiTaRS" id="Fst">
    <property type="organism name" value="mouse"/>
</dbReference>
<dbReference type="PRO" id="PR:P47931"/>
<dbReference type="Proteomes" id="UP000000589">
    <property type="component" value="Chromosome 13"/>
</dbReference>
<dbReference type="RNAct" id="P47931">
    <property type="molecule type" value="protein"/>
</dbReference>
<dbReference type="Bgee" id="ENSMUSG00000021765">
    <property type="expression patterns" value="Expressed in cumulus cell and 241 other cell types or tissues"/>
</dbReference>
<dbReference type="ExpressionAtlas" id="P47931">
    <property type="expression patterns" value="baseline and differential"/>
</dbReference>
<dbReference type="GO" id="GO:0005737">
    <property type="term" value="C:cytoplasm"/>
    <property type="evidence" value="ECO:0000314"/>
    <property type="project" value="MGI"/>
</dbReference>
<dbReference type="GO" id="GO:0005615">
    <property type="term" value="C:extracellular space"/>
    <property type="evidence" value="ECO:0007005"/>
    <property type="project" value="BHF-UCL"/>
</dbReference>
<dbReference type="GO" id="GO:0005730">
    <property type="term" value="C:nucleolus"/>
    <property type="evidence" value="ECO:0007669"/>
    <property type="project" value="UniProtKB-SubCell"/>
</dbReference>
<dbReference type="GO" id="GO:0005634">
    <property type="term" value="C:nucleus"/>
    <property type="evidence" value="ECO:0000314"/>
    <property type="project" value="MGI"/>
</dbReference>
<dbReference type="GO" id="GO:0048185">
    <property type="term" value="F:activin binding"/>
    <property type="evidence" value="ECO:0007669"/>
    <property type="project" value="Ensembl"/>
</dbReference>
<dbReference type="GO" id="GO:0038102">
    <property type="term" value="F:activin receptor antagonist activity"/>
    <property type="evidence" value="ECO:0007669"/>
    <property type="project" value="Ensembl"/>
</dbReference>
<dbReference type="GO" id="GO:0043395">
    <property type="term" value="F:heparan sulfate proteoglycan binding"/>
    <property type="evidence" value="ECO:0007669"/>
    <property type="project" value="Ensembl"/>
</dbReference>
<dbReference type="GO" id="GO:0036305">
    <property type="term" value="P:ameloblast differentiation"/>
    <property type="evidence" value="ECO:0000315"/>
    <property type="project" value="MGI"/>
</dbReference>
<dbReference type="GO" id="GO:0030509">
    <property type="term" value="P:BMP signaling pathway"/>
    <property type="evidence" value="ECO:0000316"/>
    <property type="project" value="MGI"/>
</dbReference>
<dbReference type="GO" id="GO:0008585">
    <property type="term" value="P:female gonad development"/>
    <property type="evidence" value="ECO:0000315"/>
    <property type="project" value="MGI"/>
</dbReference>
<dbReference type="GO" id="GO:0007276">
    <property type="term" value="P:gamete generation"/>
    <property type="evidence" value="ECO:0000316"/>
    <property type="project" value="MGI"/>
</dbReference>
<dbReference type="GO" id="GO:0031069">
    <property type="term" value="P:hair follicle morphogenesis"/>
    <property type="evidence" value="ECO:0000315"/>
    <property type="project" value="MGI"/>
</dbReference>
<dbReference type="GO" id="GO:0002244">
    <property type="term" value="P:hematopoietic progenitor cell differentiation"/>
    <property type="evidence" value="ECO:0007669"/>
    <property type="project" value="Ensembl"/>
</dbReference>
<dbReference type="GO" id="GO:0043616">
    <property type="term" value="P:keratinocyte proliferation"/>
    <property type="evidence" value="ECO:0000315"/>
    <property type="project" value="MGI"/>
</dbReference>
<dbReference type="GO" id="GO:0030857">
    <property type="term" value="P:negative regulation of epithelial cell differentiation"/>
    <property type="evidence" value="ECO:0000315"/>
    <property type="project" value="MGI"/>
</dbReference>
<dbReference type="GO" id="GO:0000122">
    <property type="term" value="P:negative regulation of transcription by RNA polymerase II"/>
    <property type="evidence" value="ECO:0007669"/>
    <property type="project" value="Ensembl"/>
</dbReference>
<dbReference type="GO" id="GO:0042475">
    <property type="term" value="P:odontogenesis of dentin-containing tooth"/>
    <property type="evidence" value="ECO:0000315"/>
    <property type="project" value="MGI"/>
</dbReference>
<dbReference type="GO" id="GO:0007389">
    <property type="term" value="P:pattern specification process"/>
    <property type="evidence" value="ECO:0000315"/>
    <property type="project" value="MGI"/>
</dbReference>
<dbReference type="GO" id="GO:0051798">
    <property type="term" value="P:positive regulation of hair follicle development"/>
    <property type="evidence" value="ECO:0000266"/>
    <property type="project" value="MGI"/>
</dbReference>
<dbReference type="GO" id="GO:0001501">
    <property type="term" value="P:skeletal system development"/>
    <property type="evidence" value="ECO:0000316"/>
    <property type="project" value="MGI"/>
</dbReference>
<dbReference type="CDD" id="cd00104">
    <property type="entry name" value="KAZAL_FS"/>
    <property type="match status" value="2"/>
</dbReference>
<dbReference type="FunFam" id="3.30.60.30:FF:000005">
    <property type="entry name" value="Follistatin a"/>
    <property type="match status" value="1"/>
</dbReference>
<dbReference type="FunFam" id="3.30.60.30:FF:000006">
    <property type="entry name" value="Follistatin a"/>
    <property type="match status" value="1"/>
</dbReference>
<dbReference type="FunFam" id="3.30.60.30:FF:000009">
    <property type="entry name" value="Follistatin a"/>
    <property type="match status" value="1"/>
</dbReference>
<dbReference type="FunFam" id="3.90.290.10:FF:000013">
    <property type="entry name" value="Follistatin a"/>
    <property type="match status" value="1"/>
</dbReference>
<dbReference type="Gene3D" id="3.30.60.30">
    <property type="match status" value="3"/>
</dbReference>
<dbReference type="Gene3D" id="3.90.290.10">
    <property type="entry name" value="TGF-beta binding (TB) domain"/>
    <property type="match status" value="1"/>
</dbReference>
<dbReference type="InterPro" id="IPR003645">
    <property type="entry name" value="Fol_N"/>
</dbReference>
<dbReference type="InterPro" id="IPR015369">
    <property type="entry name" value="Follistatin/Osteonectin_EGF"/>
</dbReference>
<dbReference type="InterPro" id="IPR002350">
    <property type="entry name" value="Kazal_dom"/>
</dbReference>
<dbReference type="InterPro" id="IPR036058">
    <property type="entry name" value="Kazal_dom_sf"/>
</dbReference>
<dbReference type="InterPro" id="IPR050653">
    <property type="entry name" value="Prot_Inhib_GrowthFact_Antg"/>
</dbReference>
<dbReference type="InterPro" id="IPR017878">
    <property type="entry name" value="TB_dom"/>
</dbReference>
<dbReference type="InterPro" id="IPR036773">
    <property type="entry name" value="TB_dom_sf"/>
</dbReference>
<dbReference type="PANTHER" id="PTHR10913:SF45">
    <property type="entry name" value="FOLLISTATIN, ISOFORM A-RELATED"/>
    <property type="match status" value="1"/>
</dbReference>
<dbReference type="PANTHER" id="PTHR10913">
    <property type="entry name" value="FOLLISTATIN-RELATED"/>
    <property type="match status" value="1"/>
</dbReference>
<dbReference type="Pfam" id="PF09289">
    <property type="entry name" value="FOLN"/>
    <property type="match status" value="1"/>
</dbReference>
<dbReference type="Pfam" id="PF21333">
    <property type="entry name" value="FST_N"/>
    <property type="match status" value="1"/>
</dbReference>
<dbReference type="Pfam" id="PF07648">
    <property type="entry name" value="Kazal_2"/>
    <property type="match status" value="3"/>
</dbReference>
<dbReference type="SMART" id="SM00274">
    <property type="entry name" value="FOLN"/>
    <property type="match status" value="3"/>
</dbReference>
<dbReference type="SMART" id="SM00280">
    <property type="entry name" value="KAZAL"/>
    <property type="match status" value="3"/>
</dbReference>
<dbReference type="SUPFAM" id="SSF100895">
    <property type="entry name" value="Kazal-type serine protease inhibitors"/>
    <property type="match status" value="3"/>
</dbReference>
<dbReference type="SUPFAM" id="SSF57581">
    <property type="entry name" value="TB module/8-cys domain"/>
    <property type="match status" value="1"/>
</dbReference>
<dbReference type="PROSITE" id="PS51465">
    <property type="entry name" value="KAZAL_2"/>
    <property type="match status" value="3"/>
</dbReference>
<dbReference type="PROSITE" id="PS51364">
    <property type="entry name" value="TB"/>
    <property type="match status" value="1"/>
</dbReference>